<accession>P23841</accession>
<accession>P76531</accession>
<organism>
    <name type="scientific">Escherichia coli (strain K12)</name>
    <dbReference type="NCBI Taxonomy" id="83333"/>
    <lineage>
        <taxon>Bacteria</taxon>
        <taxon>Pseudomonadati</taxon>
        <taxon>Pseudomonadota</taxon>
        <taxon>Gammaproteobacteria</taxon>
        <taxon>Enterobacterales</taxon>
        <taxon>Enterobacteriaceae</taxon>
        <taxon>Escherichia</taxon>
    </lineage>
</organism>
<feature type="chain" id="PRO_0000105768" description="HTH-type transcriptional regulator XapR">
    <location>
        <begin position="1"/>
        <end position="294"/>
    </location>
</feature>
<feature type="domain" description="HTH lysR-type" evidence="1">
    <location>
        <begin position="7"/>
        <end position="64"/>
    </location>
</feature>
<feature type="DNA-binding region" description="H-T-H motif" evidence="1">
    <location>
        <begin position="24"/>
        <end position="43"/>
    </location>
</feature>
<proteinExistence type="inferred from homology"/>
<sequence length="294" mass="33627">MERVYRTDLKLLRYFLAVAEELHFGRAAARLNMSQPPLSIHIKELENQLGTQLFIRHSRSVVLTHAGKILMEESRRLLVNANNVLARIEQIGRGEAGRIELGVVGTAMWGRMRPVMRRFLRENPNVDVLFREKMPAMQMALLERRELDAGIWRMATEPPTGFTSLRLHESAFLVAMPEEHHLSSFSTVPLEALRDEYFVTMPPVYTDWDFLQRVCQQVGFSPVVIREVNEPQTVLAMVSMGIGITLIADSYAQMNWPGVIFRPLKQRIPADLYIVYETQQVTPAMVKLLAALTQ</sequence>
<reference key="1">
    <citation type="journal article" date="1990" name="J. Mol. Biol.">
        <title>Precise mapping and comparison of two evolutionarily related regions of the Escherichia coli K-12 chromosome. Evolution of valU and lysT from an ancestral tRNA operon.</title>
        <authorList>
            <person name="Brun Y.V."/>
            <person name="Breton R."/>
            <person name="Lanouette P."/>
            <person name="Lapointe J."/>
        </authorList>
    </citation>
    <scope>NUCLEOTIDE SEQUENCE [GENOMIC DNA]</scope>
</reference>
<reference key="2">
    <citation type="journal article" date="1997" name="DNA Res.">
        <title>Construction of a contiguous 874-kb sequence of the Escherichia coli-K12 genome corresponding to 50.0-68.8 min on the linkage map and analysis of its sequence features.</title>
        <authorList>
            <person name="Yamamoto Y."/>
            <person name="Aiba H."/>
            <person name="Baba T."/>
            <person name="Hayashi K."/>
            <person name="Inada T."/>
            <person name="Isono K."/>
            <person name="Itoh T."/>
            <person name="Kimura S."/>
            <person name="Kitagawa M."/>
            <person name="Makino K."/>
            <person name="Miki T."/>
            <person name="Mitsuhashi N."/>
            <person name="Mizobuchi K."/>
            <person name="Mori H."/>
            <person name="Nakade S."/>
            <person name="Nakamura Y."/>
            <person name="Nashimoto H."/>
            <person name="Oshima T."/>
            <person name="Oyama S."/>
            <person name="Saito N."/>
            <person name="Sampei G."/>
            <person name="Satoh Y."/>
            <person name="Sivasundaram S."/>
            <person name="Tagami H."/>
            <person name="Takahashi H."/>
            <person name="Takeda J."/>
            <person name="Takemoto K."/>
            <person name="Uehara K."/>
            <person name="Wada C."/>
            <person name="Yamagata S."/>
            <person name="Horiuchi T."/>
        </authorList>
    </citation>
    <scope>NUCLEOTIDE SEQUENCE [LARGE SCALE GENOMIC DNA]</scope>
    <source>
        <strain>K12 / W3110 / ATCC 27325 / DSM 5911</strain>
    </source>
</reference>
<reference key="3">
    <citation type="journal article" date="1997" name="Science">
        <title>The complete genome sequence of Escherichia coli K-12.</title>
        <authorList>
            <person name="Blattner F.R."/>
            <person name="Plunkett G. III"/>
            <person name="Bloch C.A."/>
            <person name="Perna N.T."/>
            <person name="Burland V."/>
            <person name="Riley M."/>
            <person name="Collado-Vides J."/>
            <person name="Glasner J.D."/>
            <person name="Rode C.K."/>
            <person name="Mayhew G.F."/>
            <person name="Gregor J."/>
            <person name="Davis N.W."/>
            <person name="Kirkpatrick H.A."/>
            <person name="Goeden M.A."/>
            <person name="Rose D.J."/>
            <person name="Mau B."/>
            <person name="Shao Y."/>
        </authorList>
    </citation>
    <scope>NUCLEOTIDE SEQUENCE [LARGE SCALE GENOMIC DNA]</scope>
    <source>
        <strain>K12 / MG1655 / ATCC 47076</strain>
    </source>
</reference>
<reference key="4">
    <citation type="journal article" date="2006" name="Mol. Syst. Biol.">
        <title>Highly accurate genome sequences of Escherichia coli K-12 strains MG1655 and W3110.</title>
        <authorList>
            <person name="Hayashi K."/>
            <person name="Morooka N."/>
            <person name="Yamamoto Y."/>
            <person name="Fujita K."/>
            <person name="Isono K."/>
            <person name="Choi S."/>
            <person name="Ohtsubo E."/>
            <person name="Baba T."/>
            <person name="Wanner B.L."/>
            <person name="Mori H."/>
            <person name="Horiuchi T."/>
        </authorList>
    </citation>
    <scope>NUCLEOTIDE SEQUENCE [LARGE SCALE GENOMIC DNA]</scope>
    <source>
        <strain>K12 / W3110 / ATCC 27325 / DSM 5911</strain>
    </source>
</reference>
<reference key="5">
    <citation type="journal article" date="1995" name="J. Bacteriol.">
        <title>Identification and characterization of genes (xapA, xapB, and xapR) involved in xanthosine catabolism in Escherichia coli.</title>
        <authorList>
            <person name="Seeger C."/>
            <person name="Poulsen C."/>
            <person name="Dandanell G."/>
        </authorList>
    </citation>
    <scope>NUCLEOTIDE SEQUENCE [GENOMIC DNA] OF 1-31</scope>
    <source>
        <strain>K12</strain>
    </source>
</reference>
<comment type="function">
    <text>Positive regulator required for the expression of xapA and xapB. Binds to the inducer xanthosine.</text>
</comment>
<comment type="similarity">
    <text evidence="2">Belongs to the LysR transcriptional regulatory family.</text>
</comment>
<protein>
    <recommendedName>
        <fullName>HTH-type transcriptional regulator XapR</fullName>
    </recommendedName>
    <alternativeName>
        <fullName>Xanthosine operon regulatory protein</fullName>
    </alternativeName>
</protein>
<name>XAPR_ECOLI</name>
<dbReference type="EMBL" id="X63976">
    <property type="protein sequence ID" value="CAA45390.1"/>
    <property type="molecule type" value="Genomic_DNA"/>
</dbReference>
<dbReference type="EMBL" id="U00096">
    <property type="protein sequence ID" value="AAC75458.1"/>
    <property type="molecule type" value="Genomic_DNA"/>
</dbReference>
<dbReference type="EMBL" id="AP009048">
    <property type="protein sequence ID" value="BAA16273.1"/>
    <property type="molecule type" value="Genomic_DNA"/>
</dbReference>
<dbReference type="EMBL" id="M13687">
    <property type="protein sequence ID" value="AAA65714.1"/>
    <property type="molecule type" value="Genomic_DNA"/>
</dbReference>
<dbReference type="EMBL" id="X73828">
    <property type="protein sequence ID" value="CAA52047.1"/>
    <property type="molecule type" value="Genomic_DNA"/>
</dbReference>
<dbReference type="PIR" id="S11407">
    <property type="entry name" value="S11407"/>
</dbReference>
<dbReference type="RefSeq" id="NP_416900.1">
    <property type="nucleotide sequence ID" value="NC_000913.3"/>
</dbReference>
<dbReference type="RefSeq" id="WP_000442949.1">
    <property type="nucleotide sequence ID" value="NZ_LN832404.1"/>
</dbReference>
<dbReference type="SMR" id="P23841"/>
<dbReference type="BioGRID" id="4262007">
    <property type="interactions" value="72"/>
</dbReference>
<dbReference type="FunCoup" id="P23841">
    <property type="interactions" value="42"/>
</dbReference>
<dbReference type="IntAct" id="P23841">
    <property type="interactions" value="5"/>
</dbReference>
<dbReference type="STRING" id="511145.b2405"/>
<dbReference type="PaxDb" id="511145-b2405"/>
<dbReference type="EnsemblBacteria" id="AAC75458">
    <property type="protein sequence ID" value="AAC75458"/>
    <property type="gene ID" value="b2405"/>
</dbReference>
<dbReference type="GeneID" id="946862"/>
<dbReference type="KEGG" id="ecj:JW2396"/>
<dbReference type="KEGG" id="eco:b2405"/>
<dbReference type="KEGG" id="ecoc:C3026_13365"/>
<dbReference type="PATRIC" id="fig|1411691.4.peg.4328"/>
<dbReference type="EchoBASE" id="EB1136"/>
<dbReference type="eggNOG" id="COG0583">
    <property type="taxonomic scope" value="Bacteria"/>
</dbReference>
<dbReference type="HOGENOM" id="CLU_039613_6_4_6"/>
<dbReference type="InParanoid" id="P23841"/>
<dbReference type="OMA" id="TCHFGQA"/>
<dbReference type="OrthoDB" id="8850588at2"/>
<dbReference type="PhylomeDB" id="P23841"/>
<dbReference type="BioCyc" id="EcoCyc:EG11146-MONOMER"/>
<dbReference type="PRO" id="PR:P23841"/>
<dbReference type="Proteomes" id="UP000000625">
    <property type="component" value="Chromosome"/>
</dbReference>
<dbReference type="GO" id="GO:0032993">
    <property type="term" value="C:protein-DNA complex"/>
    <property type="evidence" value="ECO:0000318"/>
    <property type="project" value="GO_Central"/>
</dbReference>
<dbReference type="GO" id="GO:0003677">
    <property type="term" value="F:DNA binding"/>
    <property type="evidence" value="ECO:0007669"/>
    <property type="project" value="UniProtKB-KW"/>
</dbReference>
<dbReference type="GO" id="GO:0003700">
    <property type="term" value="F:DNA-binding transcription factor activity"/>
    <property type="evidence" value="ECO:0000314"/>
    <property type="project" value="EcoCyc"/>
</dbReference>
<dbReference type="GO" id="GO:0045893">
    <property type="term" value="P:positive regulation of DNA-templated transcription"/>
    <property type="evidence" value="ECO:0000314"/>
    <property type="project" value="EcoCyc"/>
</dbReference>
<dbReference type="GO" id="GO:0006355">
    <property type="term" value="P:regulation of DNA-templated transcription"/>
    <property type="evidence" value="ECO:0000318"/>
    <property type="project" value="GO_Central"/>
</dbReference>
<dbReference type="CDD" id="cd08449">
    <property type="entry name" value="PBP2_XapR"/>
    <property type="match status" value="1"/>
</dbReference>
<dbReference type="FunFam" id="1.10.10.10:FF:000001">
    <property type="entry name" value="LysR family transcriptional regulator"/>
    <property type="match status" value="1"/>
</dbReference>
<dbReference type="Gene3D" id="3.40.190.10">
    <property type="entry name" value="Periplasmic binding protein-like II"/>
    <property type="match status" value="2"/>
</dbReference>
<dbReference type="Gene3D" id="1.10.10.10">
    <property type="entry name" value="Winged helix-like DNA-binding domain superfamily/Winged helix DNA-binding domain"/>
    <property type="match status" value="1"/>
</dbReference>
<dbReference type="InterPro" id="IPR005119">
    <property type="entry name" value="LysR_subst-bd"/>
</dbReference>
<dbReference type="InterPro" id="IPR000847">
    <property type="entry name" value="Tscrpt_reg_HTH_LysR"/>
</dbReference>
<dbReference type="InterPro" id="IPR036388">
    <property type="entry name" value="WH-like_DNA-bd_sf"/>
</dbReference>
<dbReference type="InterPro" id="IPR036390">
    <property type="entry name" value="WH_DNA-bd_sf"/>
</dbReference>
<dbReference type="InterPro" id="IPR037409">
    <property type="entry name" value="XapR_PBP2"/>
</dbReference>
<dbReference type="NCBIfam" id="NF007439">
    <property type="entry name" value="PRK09986.1"/>
    <property type="match status" value="1"/>
</dbReference>
<dbReference type="PANTHER" id="PTHR30346:SF27">
    <property type="entry name" value="HTH-TYPE TRANSCRIPTIONAL REGULATOR XAPR"/>
    <property type="match status" value="1"/>
</dbReference>
<dbReference type="PANTHER" id="PTHR30346">
    <property type="entry name" value="TRANSCRIPTIONAL DUAL REGULATOR HCAR-RELATED"/>
    <property type="match status" value="1"/>
</dbReference>
<dbReference type="Pfam" id="PF00126">
    <property type="entry name" value="HTH_1"/>
    <property type="match status" value="1"/>
</dbReference>
<dbReference type="Pfam" id="PF03466">
    <property type="entry name" value="LysR_substrate"/>
    <property type="match status" value="1"/>
</dbReference>
<dbReference type="PRINTS" id="PR00039">
    <property type="entry name" value="HTHLYSR"/>
</dbReference>
<dbReference type="SUPFAM" id="SSF53850">
    <property type="entry name" value="Periplasmic binding protein-like II"/>
    <property type="match status" value="1"/>
</dbReference>
<dbReference type="SUPFAM" id="SSF46785">
    <property type="entry name" value="Winged helix' DNA-binding domain"/>
    <property type="match status" value="1"/>
</dbReference>
<dbReference type="PROSITE" id="PS50931">
    <property type="entry name" value="HTH_LYSR"/>
    <property type="match status" value="1"/>
</dbReference>
<gene>
    <name type="primary">xapR</name>
    <name type="synonym">pndR</name>
    <name type="synonym">yfeB</name>
    <name type="ordered locus">b2405</name>
    <name type="ordered locus">JW2396</name>
</gene>
<keyword id="KW-0010">Activator</keyword>
<keyword id="KW-0238">DNA-binding</keyword>
<keyword id="KW-1185">Reference proteome</keyword>
<keyword id="KW-0804">Transcription</keyword>
<keyword id="KW-0805">Transcription regulation</keyword>
<evidence type="ECO:0000255" key="1">
    <source>
        <dbReference type="PROSITE-ProRule" id="PRU00253"/>
    </source>
</evidence>
<evidence type="ECO:0000305" key="2"/>